<accession>Q4ZGE1</accession>
<proteinExistence type="evidence at protein level"/>
<gene>
    <name evidence="3" type="primary">emr1</name>
    <name evidence="5" type="ORF">SPAC8C9.19</name>
</gene>
<evidence type="ECO:0000255" key="1"/>
<evidence type="ECO:0000269" key="2">
    <source>
    </source>
</evidence>
<evidence type="ECO:0000303" key="3">
    <source>
    </source>
</evidence>
<evidence type="ECO:0000305" key="4"/>
<evidence type="ECO:0000312" key="5">
    <source>
        <dbReference type="PomBase" id="SPAC8C9.19"/>
    </source>
</evidence>
<dbReference type="EMBL" id="CU329670">
    <property type="protein sequence ID" value="CAI94397.2"/>
    <property type="molecule type" value="Genomic_DNA"/>
</dbReference>
<dbReference type="RefSeq" id="XP_001713088.2">
    <property type="nucleotide sequence ID" value="XM_001713036.2"/>
</dbReference>
<dbReference type="SMR" id="Q4ZGE1"/>
<dbReference type="BioGRID" id="858058">
    <property type="interactions" value="4"/>
</dbReference>
<dbReference type="STRING" id="284812.Q4ZGE1"/>
<dbReference type="PaxDb" id="4896-SPAC8C9.19.1"/>
<dbReference type="EnsemblFungi" id="SPAC8C9.19.1">
    <property type="protein sequence ID" value="SPAC8C9.19.1:pep"/>
    <property type="gene ID" value="SPAC8C9.19"/>
</dbReference>
<dbReference type="PomBase" id="SPAC8C9.19">
    <property type="gene designation" value="emr1"/>
</dbReference>
<dbReference type="VEuPathDB" id="FungiDB:SPAC8C9.19"/>
<dbReference type="eggNOG" id="ENOG502SE6C">
    <property type="taxonomic scope" value="Eukaryota"/>
</dbReference>
<dbReference type="HOGENOM" id="CLU_196188_0_0_1"/>
<dbReference type="InParanoid" id="Q4ZGE1"/>
<dbReference type="OMA" id="RRAFYNF"/>
<dbReference type="PRO" id="PR:Q4ZGE1"/>
<dbReference type="Proteomes" id="UP000002485">
    <property type="component" value="Chromosome I"/>
</dbReference>
<dbReference type="GO" id="GO:0032473">
    <property type="term" value="C:cytoplasmic side of mitochondrial outer membrane"/>
    <property type="evidence" value="ECO:0000314"/>
    <property type="project" value="PomBase"/>
</dbReference>
<dbReference type="GO" id="GO:0005741">
    <property type="term" value="C:mitochondrial outer membrane"/>
    <property type="evidence" value="ECO:0000314"/>
    <property type="project" value="PomBase"/>
</dbReference>
<dbReference type="GO" id="GO:0120010">
    <property type="term" value="P:intermembrane phospholipid transfer"/>
    <property type="evidence" value="ECO:0000315"/>
    <property type="project" value="PomBase"/>
</dbReference>
<dbReference type="GO" id="GO:0007008">
    <property type="term" value="P:outer mitochondrial membrane organization"/>
    <property type="evidence" value="ECO:0000315"/>
    <property type="project" value="PomBase"/>
</dbReference>
<dbReference type="InterPro" id="IPR035195">
    <property type="entry name" value="Emr1"/>
</dbReference>
<dbReference type="Pfam" id="PF17237">
    <property type="entry name" value="Emr1"/>
    <property type="match status" value="1"/>
</dbReference>
<name>EMR1_SCHPO</name>
<feature type="chain" id="PRO_0000343165" description="ERMES regulator 1">
    <location>
        <begin position="1"/>
        <end position="61"/>
    </location>
</feature>
<feature type="topological domain" description="Mitochondrial intermembrane" evidence="2">
    <location>
        <begin position="1"/>
        <end position="20"/>
    </location>
</feature>
<feature type="transmembrane region" description="Helical" evidence="1">
    <location>
        <begin position="21"/>
        <end position="43"/>
    </location>
</feature>
<feature type="topological domain" description="Cytoplasmic" evidence="2">
    <location>
        <begin position="44"/>
        <end position="61"/>
    </location>
</feature>
<keyword id="KW-0472">Membrane</keyword>
<keyword id="KW-0496">Mitochondrion</keyword>
<keyword id="KW-1000">Mitochondrion outer membrane</keyword>
<keyword id="KW-1185">Reference proteome</keyword>
<keyword id="KW-0812">Transmembrane</keyword>
<keyword id="KW-1133">Transmembrane helix</keyword>
<reference key="1">
    <citation type="journal article" date="2002" name="Nature">
        <title>The genome sequence of Schizosaccharomyces pombe.</title>
        <authorList>
            <person name="Wood V."/>
            <person name="Gwilliam R."/>
            <person name="Rajandream M.A."/>
            <person name="Lyne M.H."/>
            <person name="Lyne R."/>
            <person name="Stewart A."/>
            <person name="Sgouros J.G."/>
            <person name="Peat N."/>
            <person name="Hayles J."/>
            <person name="Baker S.G."/>
            <person name="Basham D."/>
            <person name="Bowman S."/>
            <person name="Brooks K."/>
            <person name="Brown D."/>
            <person name="Brown S."/>
            <person name="Chillingworth T."/>
            <person name="Churcher C.M."/>
            <person name="Collins M."/>
            <person name="Connor R."/>
            <person name="Cronin A."/>
            <person name="Davis P."/>
            <person name="Feltwell T."/>
            <person name="Fraser A."/>
            <person name="Gentles S."/>
            <person name="Goble A."/>
            <person name="Hamlin N."/>
            <person name="Harris D.E."/>
            <person name="Hidalgo J."/>
            <person name="Hodgson G."/>
            <person name="Holroyd S."/>
            <person name="Hornsby T."/>
            <person name="Howarth S."/>
            <person name="Huckle E.J."/>
            <person name="Hunt S."/>
            <person name="Jagels K."/>
            <person name="James K.D."/>
            <person name="Jones L."/>
            <person name="Jones M."/>
            <person name="Leather S."/>
            <person name="McDonald S."/>
            <person name="McLean J."/>
            <person name="Mooney P."/>
            <person name="Moule S."/>
            <person name="Mungall K.L."/>
            <person name="Murphy L.D."/>
            <person name="Niblett D."/>
            <person name="Odell C."/>
            <person name="Oliver K."/>
            <person name="O'Neil S."/>
            <person name="Pearson D."/>
            <person name="Quail M.A."/>
            <person name="Rabbinowitsch E."/>
            <person name="Rutherford K.M."/>
            <person name="Rutter S."/>
            <person name="Saunders D."/>
            <person name="Seeger K."/>
            <person name="Sharp S."/>
            <person name="Skelton J."/>
            <person name="Simmonds M.N."/>
            <person name="Squares R."/>
            <person name="Squares S."/>
            <person name="Stevens K."/>
            <person name="Taylor K."/>
            <person name="Taylor R.G."/>
            <person name="Tivey A."/>
            <person name="Walsh S.V."/>
            <person name="Warren T."/>
            <person name="Whitehead S."/>
            <person name="Woodward J.R."/>
            <person name="Volckaert G."/>
            <person name="Aert R."/>
            <person name="Robben J."/>
            <person name="Grymonprez B."/>
            <person name="Weltjens I."/>
            <person name="Vanstreels E."/>
            <person name="Rieger M."/>
            <person name="Schaefer M."/>
            <person name="Mueller-Auer S."/>
            <person name="Gabel C."/>
            <person name="Fuchs M."/>
            <person name="Duesterhoeft A."/>
            <person name="Fritzc C."/>
            <person name="Holzer E."/>
            <person name="Moestl D."/>
            <person name="Hilbert H."/>
            <person name="Borzym K."/>
            <person name="Langer I."/>
            <person name="Beck A."/>
            <person name="Lehrach H."/>
            <person name="Reinhardt R."/>
            <person name="Pohl T.M."/>
            <person name="Eger P."/>
            <person name="Zimmermann W."/>
            <person name="Wedler H."/>
            <person name="Wambutt R."/>
            <person name="Purnelle B."/>
            <person name="Goffeau A."/>
            <person name="Cadieu E."/>
            <person name="Dreano S."/>
            <person name="Gloux S."/>
            <person name="Lelaure V."/>
            <person name="Mottier S."/>
            <person name="Galibert F."/>
            <person name="Aves S.J."/>
            <person name="Xiang Z."/>
            <person name="Hunt C."/>
            <person name="Moore K."/>
            <person name="Hurst S.M."/>
            <person name="Lucas M."/>
            <person name="Rochet M."/>
            <person name="Gaillardin C."/>
            <person name="Tallada V.A."/>
            <person name="Garzon A."/>
            <person name="Thode G."/>
            <person name="Daga R.R."/>
            <person name="Cruzado L."/>
            <person name="Jimenez J."/>
            <person name="Sanchez M."/>
            <person name="del Rey F."/>
            <person name="Benito J."/>
            <person name="Dominguez A."/>
            <person name="Revuelta J.L."/>
            <person name="Moreno S."/>
            <person name="Armstrong J."/>
            <person name="Forsburg S.L."/>
            <person name="Cerutti L."/>
            <person name="Lowe T."/>
            <person name="McCombie W.R."/>
            <person name="Paulsen I."/>
            <person name="Potashkin J."/>
            <person name="Shpakovski G.V."/>
            <person name="Ussery D."/>
            <person name="Barrell B.G."/>
            <person name="Nurse P."/>
        </authorList>
    </citation>
    <scope>NUCLEOTIDE SEQUENCE [LARGE SCALE GENOMIC DNA]</scope>
    <source>
        <strain>972 / ATCC 24843</strain>
    </source>
</reference>
<reference key="2">
    <citation type="journal article" date="2021" name="Nat. Commun.">
        <title>Emr1 regulates the number of foci of the endoplasmic reticulum-mitochondria encounter structure complex.</title>
        <authorList>
            <person name="Rasul F."/>
            <person name="Zheng F."/>
            <person name="Dong F."/>
            <person name="He J."/>
            <person name="Liu L."/>
            <person name="Liu W."/>
            <person name="Cheema J.Y."/>
            <person name="Wei W."/>
            <person name="Fu C."/>
        </authorList>
    </citation>
    <scope>FUNCTION</scope>
    <scope>INTERACTION WITH THE ERMES COMPLEX; MDM12 AND MDM34</scope>
    <scope>SUBCELLULAR LOCATION</scope>
    <scope>DISRUPTION PHENOTYPE</scope>
    <scope>TOPOLOGY</scope>
</reference>
<comment type="function">
    <text evidence="2">Mediates the formation of endoplasmic reticulum (ER)-mitochondria encounter structure (ERMES) foci, thereby contributing to the formation of ER-mitochondrial contact sites.</text>
</comment>
<comment type="subunit">
    <text evidence="2">Interacts with the ER-mitochondria encounter structure (ERMES) complex (PubMed:33483504). Interacts with mdm12 (PubMed:33483504). Interacts with mdm34 (PubMed:33483504).</text>
</comment>
<comment type="subcellular location">
    <subcellularLocation>
        <location evidence="2">Mitochondrion outer membrane</location>
        <topology evidence="2">Single-pass type III membrane protein</topology>
    </subcellularLocation>
</comment>
<comment type="disruption phenotype">
    <text evidence="2">Decreases the number of ER-mitochondria encounter structure (ERMES) foci in cells (PubMed:33483504). Abnormal mitochondrial organization within cells, manifesting as fragmented or aggregated mitochondria, spherical mitochondria, or absence of mitochondria (PubMed:33483504). Decreases the level of phosphatidylethanolamine (PE) in cells (PubMed:33483504). Decreases growth on glucose (fermentable) and glycerol (non-fermentable) carbon sources (PubMed:33483504). Simultaneous disruption of ept1, psd2 or psd3 leads to decreased growth on glucose carbon source (PubMed:33483504).</text>
</comment>
<comment type="similarity">
    <text evidence="4">Belongs to the EMR1 family.</text>
</comment>
<organism>
    <name type="scientific">Schizosaccharomyces pombe (strain 972 / ATCC 24843)</name>
    <name type="common">Fission yeast</name>
    <dbReference type="NCBI Taxonomy" id="284812"/>
    <lineage>
        <taxon>Eukaryota</taxon>
        <taxon>Fungi</taxon>
        <taxon>Dikarya</taxon>
        <taxon>Ascomycota</taxon>
        <taxon>Taphrinomycotina</taxon>
        <taxon>Schizosaccharomycetes</taxon>
        <taxon>Schizosaccharomycetales</taxon>
        <taxon>Schizosaccharomycetaceae</taxon>
        <taxon>Schizosaccharomyces</taxon>
    </lineage>
</organism>
<sequence length="61" mass="7102">MLPNLRRIFASFRTEEEERSYSRKAFFHLIGYITCSVLFSWLVRKKVISSPVVSSPIHALS</sequence>
<protein>
    <recommendedName>
        <fullName evidence="3">ERMES regulator 1</fullName>
    </recommendedName>
</protein>